<evidence type="ECO:0000255" key="1">
    <source>
        <dbReference type="HAMAP-Rule" id="MF_00339"/>
    </source>
</evidence>
<keyword id="KW-0021">Allosteric enzyme</keyword>
<keyword id="KW-0067">ATP-binding</keyword>
<keyword id="KW-0963">Cytoplasm</keyword>
<keyword id="KW-0324">Glycolysis</keyword>
<keyword id="KW-0418">Kinase</keyword>
<keyword id="KW-0460">Magnesium</keyword>
<keyword id="KW-0479">Metal-binding</keyword>
<keyword id="KW-0547">Nucleotide-binding</keyword>
<keyword id="KW-1185">Reference proteome</keyword>
<keyword id="KW-0808">Transferase</keyword>
<dbReference type="EC" id="2.7.1.11" evidence="1"/>
<dbReference type="EMBL" id="CP000800">
    <property type="protein sequence ID" value="ABV17258.1"/>
    <property type="molecule type" value="Genomic_DNA"/>
</dbReference>
<dbReference type="RefSeq" id="WP_000591795.1">
    <property type="nucleotide sequence ID" value="NC_009801.1"/>
</dbReference>
<dbReference type="SMR" id="A7ZUC9"/>
<dbReference type="GeneID" id="93777982"/>
<dbReference type="KEGG" id="ecw:EcE24377A_4449"/>
<dbReference type="HOGENOM" id="CLU_020655_0_1_6"/>
<dbReference type="UniPathway" id="UPA00109">
    <property type="reaction ID" value="UER00182"/>
</dbReference>
<dbReference type="Proteomes" id="UP000001122">
    <property type="component" value="Chromosome"/>
</dbReference>
<dbReference type="GO" id="GO:0005945">
    <property type="term" value="C:6-phosphofructokinase complex"/>
    <property type="evidence" value="ECO:0007669"/>
    <property type="project" value="TreeGrafter"/>
</dbReference>
<dbReference type="GO" id="GO:0003872">
    <property type="term" value="F:6-phosphofructokinase activity"/>
    <property type="evidence" value="ECO:0007669"/>
    <property type="project" value="UniProtKB-UniRule"/>
</dbReference>
<dbReference type="GO" id="GO:0016208">
    <property type="term" value="F:AMP binding"/>
    <property type="evidence" value="ECO:0007669"/>
    <property type="project" value="TreeGrafter"/>
</dbReference>
<dbReference type="GO" id="GO:0005524">
    <property type="term" value="F:ATP binding"/>
    <property type="evidence" value="ECO:0007669"/>
    <property type="project" value="UniProtKB-KW"/>
</dbReference>
<dbReference type="GO" id="GO:0070095">
    <property type="term" value="F:fructose-6-phosphate binding"/>
    <property type="evidence" value="ECO:0007669"/>
    <property type="project" value="TreeGrafter"/>
</dbReference>
<dbReference type="GO" id="GO:0042802">
    <property type="term" value="F:identical protein binding"/>
    <property type="evidence" value="ECO:0007669"/>
    <property type="project" value="TreeGrafter"/>
</dbReference>
<dbReference type="GO" id="GO:0046872">
    <property type="term" value="F:metal ion binding"/>
    <property type="evidence" value="ECO:0007669"/>
    <property type="project" value="UniProtKB-KW"/>
</dbReference>
<dbReference type="GO" id="GO:0048029">
    <property type="term" value="F:monosaccharide binding"/>
    <property type="evidence" value="ECO:0007669"/>
    <property type="project" value="TreeGrafter"/>
</dbReference>
<dbReference type="GO" id="GO:0061621">
    <property type="term" value="P:canonical glycolysis"/>
    <property type="evidence" value="ECO:0007669"/>
    <property type="project" value="TreeGrafter"/>
</dbReference>
<dbReference type="GO" id="GO:0030388">
    <property type="term" value="P:fructose 1,6-bisphosphate metabolic process"/>
    <property type="evidence" value="ECO:0007669"/>
    <property type="project" value="TreeGrafter"/>
</dbReference>
<dbReference type="GO" id="GO:0006002">
    <property type="term" value="P:fructose 6-phosphate metabolic process"/>
    <property type="evidence" value="ECO:0007669"/>
    <property type="project" value="InterPro"/>
</dbReference>
<dbReference type="CDD" id="cd00763">
    <property type="entry name" value="Bacterial_PFK"/>
    <property type="match status" value="1"/>
</dbReference>
<dbReference type="FunFam" id="3.40.50.450:FF:000001">
    <property type="entry name" value="ATP-dependent 6-phosphofructokinase"/>
    <property type="match status" value="1"/>
</dbReference>
<dbReference type="FunFam" id="3.40.50.460:FF:000002">
    <property type="entry name" value="ATP-dependent 6-phosphofructokinase"/>
    <property type="match status" value="1"/>
</dbReference>
<dbReference type="Gene3D" id="3.40.50.450">
    <property type="match status" value="1"/>
</dbReference>
<dbReference type="Gene3D" id="3.40.50.460">
    <property type="entry name" value="Phosphofructokinase domain"/>
    <property type="match status" value="1"/>
</dbReference>
<dbReference type="HAMAP" id="MF_00339">
    <property type="entry name" value="Phosphofructokinase_I_B1"/>
    <property type="match status" value="1"/>
</dbReference>
<dbReference type="InterPro" id="IPR022953">
    <property type="entry name" value="ATP_PFK"/>
</dbReference>
<dbReference type="InterPro" id="IPR012003">
    <property type="entry name" value="ATP_PFK_prok-type"/>
</dbReference>
<dbReference type="InterPro" id="IPR012828">
    <property type="entry name" value="PFKA_ATP_prok"/>
</dbReference>
<dbReference type="InterPro" id="IPR015912">
    <property type="entry name" value="Phosphofructokinase_CS"/>
</dbReference>
<dbReference type="InterPro" id="IPR000023">
    <property type="entry name" value="Phosphofructokinase_dom"/>
</dbReference>
<dbReference type="InterPro" id="IPR035966">
    <property type="entry name" value="PKF_sf"/>
</dbReference>
<dbReference type="NCBIfam" id="TIGR02482">
    <property type="entry name" value="PFKA_ATP"/>
    <property type="match status" value="1"/>
</dbReference>
<dbReference type="NCBIfam" id="NF002872">
    <property type="entry name" value="PRK03202.1"/>
    <property type="match status" value="1"/>
</dbReference>
<dbReference type="PANTHER" id="PTHR13697:SF4">
    <property type="entry name" value="ATP-DEPENDENT 6-PHOSPHOFRUCTOKINASE"/>
    <property type="match status" value="1"/>
</dbReference>
<dbReference type="PANTHER" id="PTHR13697">
    <property type="entry name" value="PHOSPHOFRUCTOKINASE"/>
    <property type="match status" value="1"/>
</dbReference>
<dbReference type="Pfam" id="PF00365">
    <property type="entry name" value="PFK"/>
    <property type="match status" value="1"/>
</dbReference>
<dbReference type="PIRSF" id="PIRSF000532">
    <property type="entry name" value="ATP_PFK_prok"/>
    <property type="match status" value="1"/>
</dbReference>
<dbReference type="PRINTS" id="PR00476">
    <property type="entry name" value="PHFRCTKINASE"/>
</dbReference>
<dbReference type="SUPFAM" id="SSF53784">
    <property type="entry name" value="Phosphofructokinase"/>
    <property type="match status" value="1"/>
</dbReference>
<dbReference type="PROSITE" id="PS00433">
    <property type="entry name" value="PHOSPHOFRUCTOKINASE"/>
    <property type="match status" value="1"/>
</dbReference>
<name>PFKA_ECO24</name>
<gene>
    <name evidence="1" type="primary">pfkA</name>
    <name type="ordered locus">EcE24377A_4449</name>
</gene>
<comment type="function">
    <text evidence="1">Catalyzes the phosphorylation of D-fructose 6-phosphate to fructose 1,6-bisphosphate by ATP, the first committing step of glycolysis.</text>
</comment>
<comment type="catalytic activity">
    <reaction evidence="1">
        <text>beta-D-fructose 6-phosphate + ATP = beta-D-fructose 1,6-bisphosphate + ADP + H(+)</text>
        <dbReference type="Rhea" id="RHEA:16109"/>
        <dbReference type="ChEBI" id="CHEBI:15378"/>
        <dbReference type="ChEBI" id="CHEBI:30616"/>
        <dbReference type="ChEBI" id="CHEBI:32966"/>
        <dbReference type="ChEBI" id="CHEBI:57634"/>
        <dbReference type="ChEBI" id="CHEBI:456216"/>
        <dbReference type="EC" id="2.7.1.11"/>
    </reaction>
</comment>
<comment type="cofactor">
    <cofactor evidence="1">
        <name>Mg(2+)</name>
        <dbReference type="ChEBI" id="CHEBI:18420"/>
    </cofactor>
</comment>
<comment type="activity regulation">
    <text evidence="1">Allosterically activated by ADP and other diphosphonucleosides, and allosterically inhibited by phosphoenolpyruvate.</text>
</comment>
<comment type="pathway">
    <text evidence="1">Carbohydrate degradation; glycolysis; D-glyceraldehyde 3-phosphate and glycerone phosphate from D-glucose: step 3/4.</text>
</comment>
<comment type="subunit">
    <text evidence="1">Homotetramer.</text>
</comment>
<comment type="subcellular location">
    <subcellularLocation>
        <location evidence="1">Cytoplasm</location>
    </subcellularLocation>
</comment>
<comment type="similarity">
    <text evidence="1">Belongs to the phosphofructokinase type A (PFKA) family. ATP-dependent PFK group I subfamily. Prokaryotic clade 'B1' sub-subfamily.</text>
</comment>
<sequence>MIKKIGVLTSGGDAPGMNAAIRGVVRSALTEGLEVMGIYDGYLGLYEDRMVQLDRYSVSDMINRGGTFLGSARFPEFRDENIRAVAIENLKKRGIDALVVIGGDGSYMGAMRLTEMGFPCIGLPGTIDNDIKGTDYTIGFFTALSTVVEAIDRLRDTSSSHQRISVVEVMGRYCGDLTLAAAIAGGCEFVVVPEVEFSREDLVNEIKAGIAKGKKHAIVAITEHMCDVDELAHFIEKETGRETRATVLGHIQRGGSPVPYDRILASRMGAYAIDLLLAGYGGRCVGIQNEQLVHHDIIDAIENMKRPFKGDWLDCAKKLY</sequence>
<protein>
    <recommendedName>
        <fullName evidence="1">ATP-dependent 6-phosphofructokinase isozyme 1</fullName>
        <shortName evidence="1">ATP-PFK 1</shortName>
        <shortName evidence="1">Phosphofructokinase 1</shortName>
        <ecNumber evidence="1">2.7.1.11</ecNumber>
    </recommendedName>
    <alternativeName>
        <fullName>6-phosphofructokinase isozyme I</fullName>
    </alternativeName>
    <alternativeName>
        <fullName evidence="1">Phosphohexokinase 1</fullName>
    </alternativeName>
</protein>
<organism>
    <name type="scientific">Escherichia coli O139:H28 (strain E24377A / ETEC)</name>
    <dbReference type="NCBI Taxonomy" id="331111"/>
    <lineage>
        <taxon>Bacteria</taxon>
        <taxon>Pseudomonadati</taxon>
        <taxon>Pseudomonadota</taxon>
        <taxon>Gammaproteobacteria</taxon>
        <taxon>Enterobacterales</taxon>
        <taxon>Enterobacteriaceae</taxon>
        <taxon>Escherichia</taxon>
    </lineage>
</organism>
<accession>A7ZUC9</accession>
<proteinExistence type="inferred from homology"/>
<feature type="chain" id="PRO_1000059757" description="ATP-dependent 6-phosphofructokinase isozyme 1">
    <location>
        <begin position="1"/>
        <end position="320"/>
    </location>
</feature>
<feature type="active site" description="Proton acceptor" evidence="1">
    <location>
        <position position="128"/>
    </location>
</feature>
<feature type="binding site" evidence="1">
    <location>
        <position position="12"/>
    </location>
    <ligand>
        <name>ATP</name>
        <dbReference type="ChEBI" id="CHEBI:30616"/>
    </ligand>
</feature>
<feature type="binding site" evidence="1">
    <location>
        <begin position="22"/>
        <end position="26"/>
    </location>
    <ligand>
        <name>ADP</name>
        <dbReference type="ChEBI" id="CHEBI:456216"/>
        <note>allosteric activator; ligand shared between dimeric partners</note>
    </ligand>
</feature>
<feature type="binding site" evidence="1">
    <location>
        <begin position="55"/>
        <end position="60"/>
    </location>
    <ligand>
        <name>ADP</name>
        <dbReference type="ChEBI" id="CHEBI:456216"/>
        <note>allosteric activator; ligand shared between dimeric partners</note>
    </ligand>
</feature>
<feature type="binding site" evidence="1">
    <location>
        <begin position="73"/>
        <end position="74"/>
    </location>
    <ligand>
        <name>ATP</name>
        <dbReference type="ChEBI" id="CHEBI:30616"/>
    </ligand>
</feature>
<feature type="binding site" evidence="1">
    <location>
        <begin position="103"/>
        <end position="106"/>
    </location>
    <ligand>
        <name>ATP</name>
        <dbReference type="ChEBI" id="CHEBI:30616"/>
    </ligand>
</feature>
<feature type="binding site" evidence="1">
    <location>
        <position position="104"/>
    </location>
    <ligand>
        <name>Mg(2+)</name>
        <dbReference type="ChEBI" id="CHEBI:18420"/>
        <note>catalytic</note>
    </ligand>
</feature>
<feature type="binding site" description="in other chain" evidence="1">
    <location>
        <begin position="126"/>
        <end position="128"/>
    </location>
    <ligand>
        <name>substrate</name>
        <note>ligand shared between dimeric partners</note>
    </ligand>
</feature>
<feature type="binding site" description="in other chain" evidence="1">
    <location>
        <position position="155"/>
    </location>
    <ligand>
        <name>ADP</name>
        <dbReference type="ChEBI" id="CHEBI:456216"/>
        <note>allosteric activator; ligand shared between dimeric partners</note>
    </ligand>
</feature>
<feature type="binding site" evidence="1">
    <location>
        <position position="163"/>
    </location>
    <ligand>
        <name>substrate</name>
        <note>ligand shared between dimeric partners</note>
    </ligand>
</feature>
<feature type="binding site" description="in other chain" evidence="1">
    <location>
        <begin position="170"/>
        <end position="172"/>
    </location>
    <ligand>
        <name>substrate</name>
        <note>ligand shared between dimeric partners</note>
    </ligand>
</feature>
<feature type="binding site" description="in other chain" evidence="1">
    <location>
        <begin position="186"/>
        <end position="188"/>
    </location>
    <ligand>
        <name>ADP</name>
        <dbReference type="ChEBI" id="CHEBI:456216"/>
        <note>allosteric activator; ligand shared between dimeric partners</note>
    </ligand>
</feature>
<feature type="binding site" description="in other chain" evidence="1">
    <location>
        <position position="212"/>
    </location>
    <ligand>
        <name>ADP</name>
        <dbReference type="ChEBI" id="CHEBI:456216"/>
        <note>allosteric activator; ligand shared between dimeric partners</note>
    </ligand>
</feature>
<feature type="binding site" description="in other chain" evidence="1">
    <location>
        <begin position="214"/>
        <end position="216"/>
    </location>
    <ligand>
        <name>ADP</name>
        <dbReference type="ChEBI" id="CHEBI:456216"/>
        <note>allosteric activator; ligand shared between dimeric partners</note>
    </ligand>
</feature>
<feature type="binding site" description="in other chain" evidence="1">
    <location>
        <position position="223"/>
    </location>
    <ligand>
        <name>substrate</name>
        <note>ligand shared between dimeric partners</note>
    </ligand>
</feature>
<feature type="binding site" evidence="1">
    <location>
        <position position="244"/>
    </location>
    <ligand>
        <name>substrate</name>
        <note>ligand shared between dimeric partners</note>
    </ligand>
</feature>
<feature type="binding site" description="in other chain" evidence="1">
    <location>
        <begin position="250"/>
        <end position="253"/>
    </location>
    <ligand>
        <name>substrate</name>
        <note>ligand shared between dimeric partners</note>
    </ligand>
</feature>
<reference key="1">
    <citation type="journal article" date="2008" name="J. Bacteriol.">
        <title>The pangenome structure of Escherichia coli: comparative genomic analysis of E. coli commensal and pathogenic isolates.</title>
        <authorList>
            <person name="Rasko D.A."/>
            <person name="Rosovitz M.J."/>
            <person name="Myers G.S.A."/>
            <person name="Mongodin E.F."/>
            <person name="Fricke W.F."/>
            <person name="Gajer P."/>
            <person name="Crabtree J."/>
            <person name="Sebaihia M."/>
            <person name="Thomson N.R."/>
            <person name="Chaudhuri R."/>
            <person name="Henderson I.R."/>
            <person name="Sperandio V."/>
            <person name="Ravel J."/>
        </authorList>
    </citation>
    <scope>NUCLEOTIDE SEQUENCE [LARGE SCALE GENOMIC DNA]</scope>
    <source>
        <strain>E24377A / ETEC</strain>
    </source>
</reference>